<sequence>MSVAWLTQQLSTHGIELSDKQQQQFQTYYQMLVEWNEKMNLTSITEEHEVYLKHFYDSIATSFYTDLTKELTICDVGAGAGFPSIPLKIIFPNLKVTIVDSLNKRIHFLNQLAEALELDNVSFVHDRAETYGKGDYRASYDIVTARAVARLSVLSELCLPLVKKGGHFIALKSSKGEEELEEARFGIGVLGGKVLDTISYELPEDAGERQMIIIDKRSQTPKKYPRKPGTPNKSPLLEK</sequence>
<reference key="1">
    <citation type="journal article" date="2005" name="Proc. Natl. Acad. Sci. U.S.A.">
        <title>Whole genome sequence of Staphylococcus saprophyticus reveals the pathogenesis of uncomplicated urinary tract infection.</title>
        <authorList>
            <person name="Kuroda M."/>
            <person name="Yamashita A."/>
            <person name="Hirakawa H."/>
            <person name="Kumano M."/>
            <person name="Morikawa K."/>
            <person name="Higashide M."/>
            <person name="Maruyama A."/>
            <person name="Inose Y."/>
            <person name="Matoba K."/>
            <person name="Toh H."/>
            <person name="Kuhara S."/>
            <person name="Hattori M."/>
            <person name="Ohta T."/>
        </authorList>
    </citation>
    <scope>NUCLEOTIDE SEQUENCE [LARGE SCALE GENOMIC DNA]</scope>
    <source>
        <strain>ATCC 15305 / DSM 20229 / NCIMB 8711 / NCTC 7292 / S-41</strain>
    </source>
</reference>
<organism>
    <name type="scientific">Staphylococcus saprophyticus subsp. saprophyticus (strain ATCC 15305 / DSM 20229 / NCIMB 8711 / NCTC 7292 / S-41)</name>
    <dbReference type="NCBI Taxonomy" id="342451"/>
    <lineage>
        <taxon>Bacteria</taxon>
        <taxon>Bacillati</taxon>
        <taxon>Bacillota</taxon>
        <taxon>Bacilli</taxon>
        <taxon>Bacillales</taxon>
        <taxon>Staphylococcaceae</taxon>
        <taxon>Staphylococcus</taxon>
    </lineage>
</organism>
<evidence type="ECO:0000255" key="1">
    <source>
        <dbReference type="HAMAP-Rule" id="MF_00074"/>
    </source>
</evidence>
<evidence type="ECO:0000256" key="2">
    <source>
        <dbReference type="SAM" id="MobiDB-lite"/>
    </source>
</evidence>
<accession>Q49UI6</accession>
<feature type="chain" id="PRO_1000010217" description="Ribosomal RNA small subunit methyltransferase G">
    <location>
        <begin position="1"/>
        <end position="239"/>
    </location>
</feature>
<feature type="region of interest" description="Disordered" evidence="2">
    <location>
        <begin position="215"/>
        <end position="239"/>
    </location>
</feature>
<feature type="binding site" evidence="1">
    <location>
        <position position="77"/>
    </location>
    <ligand>
        <name>S-adenosyl-L-methionine</name>
        <dbReference type="ChEBI" id="CHEBI:59789"/>
    </ligand>
</feature>
<feature type="binding site" evidence="1">
    <location>
        <position position="82"/>
    </location>
    <ligand>
        <name>S-adenosyl-L-methionine</name>
        <dbReference type="ChEBI" id="CHEBI:59789"/>
    </ligand>
</feature>
<feature type="binding site" evidence="1">
    <location>
        <begin position="128"/>
        <end position="129"/>
    </location>
    <ligand>
        <name>S-adenosyl-L-methionine</name>
        <dbReference type="ChEBI" id="CHEBI:59789"/>
    </ligand>
</feature>
<feature type="binding site" evidence="1">
    <location>
        <position position="146"/>
    </location>
    <ligand>
        <name>S-adenosyl-L-methionine</name>
        <dbReference type="ChEBI" id="CHEBI:59789"/>
    </ligand>
</feature>
<protein>
    <recommendedName>
        <fullName evidence="1">Ribosomal RNA small subunit methyltransferase G</fullName>
        <ecNumber evidence="1">2.1.1.-</ecNumber>
    </recommendedName>
    <alternativeName>
        <fullName evidence="1">16S rRNA 7-methylguanosine methyltransferase</fullName>
        <shortName evidence="1">16S rRNA m7G methyltransferase</shortName>
    </alternativeName>
</protein>
<dbReference type="EC" id="2.1.1.-" evidence="1"/>
<dbReference type="EMBL" id="AP008934">
    <property type="protein sequence ID" value="BAE19587.1"/>
    <property type="molecule type" value="Genomic_DNA"/>
</dbReference>
<dbReference type="RefSeq" id="WP_011304027.1">
    <property type="nucleotide sequence ID" value="NZ_MTGA01000035.1"/>
</dbReference>
<dbReference type="SMR" id="Q49UI6"/>
<dbReference type="GeneID" id="3617215"/>
<dbReference type="KEGG" id="ssp:SSP2442"/>
<dbReference type="PATRIC" id="fig|342451.11.peg.2425"/>
<dbReference type="eggNOG" id="COG0357">
    <property type="taxonomic scope" value="Bacteria"/>
</dbReference>
<dbReference type="HOGENOM" id="CLU_065341_0_0_9"/>
<dbReference type="OrthoDB" id="9808773at2"/>
<dbReference type="Proteomes" id="UP000006371">
    <property type="component" value="Chromosome"/>
</dbReference>
<dbReference type="GO" id="GO:0005829">
    <property type="term" value="C:cytosol"/>
    <property type="evidence" value="ECO:0007669"/>
    <property type="project" value="TreeGrafter"/>
</dbReference>
<dbReference type="GO" id="GO:0070043">
    <property type="term" value="F:rRNA (guanine-N7-)-methyltransferase activity"/>
    <property type="evidence" value="ECO:0007669"/>
    <property type="project" value="UniProtKB-UniRule"/>
</dbReference>
<dbReference type="CDD" id="cd02440">
    <property type="entry name" value="AdoMet_MTases"/>
    <property type="match status" value="1"/>
</dbReference>
<dbReference type="FunFam" id="3.40.50.150:FF:000041">
    <property type="entry name" value="Ribosomal RNA small subunit methyltransferase G"/>
    <property type="match status" value="1"/>
</dbReference>
<dbReference type="Gene3D" id="3.40.50.150">
    <property type="entry name" value="Vaccinia Virus protein VP39"/>
    <property type="match status" value="1"/>
</dbReference>
<dbReference type="HAMAP" id="MF_00074">
    <property type="entry name" value="16SrRNA_methyltr_G"/>
    <property type="match status" value="1"/>
</dbReference>
<dbReference type="InterPro" id="IPR003682">
    <property type="entry name" value="rRNA_ssu_MeTfrase_G"/>
</dbReference>
<dbReference type="InterPro" id="IPR029063">
    <property type="entry name" value="SAM-dependent_MTases_sf"/>
</dbReference>
<dbReference type="NCBIfam" id="TIGR00138">
    <property type="entry name" value="rsmG_gidB"/>
    <property type="match status" value="1"/>
</dbReference>
<dbReference type="PANTHER" id="PTHR31760">
    <property type="entry name" value="S-ADENOSYL-L-METHIONINE-DEPENDENT METHYLTRANSFERASES SUPERFAMILY PROTEIN"/>
    <property type="match status" value="1"/>
</dbReference>
<dbReference type="PANTHER" id="PTHR31760:SF0">
    <property type="entry name" value="S-ADENOSYL-L-METHIONINE-DEPENDENT METHYLTRANSFERASES SUPERFAMILY PROTEIN"/>
    <property type="match status" value="1"/>
</dbReference>
<dbReference type="Pfam" id="PF02527">
    <property type="entry name" value="GidB"/>
    <property type="match status" value="1"/>
</dbReference>
<dbReference type="PIRSF" id="PIRSF003078">
    <property type="entry name" value="GidB"/>
    <property type="match status" value="1"/>
</dbReference>
<dbReference type="SUPFAM" id="SSF53335">
    <property type="entry name" value="S-adenosyl-L-methionine-dependent methyltransferases"/>
    <property type="match status" value="1"/>
</dbReference>
<proteinExistence type="inferred from homology"/>
<name>RSMG_STAS1</name>
<keyword id="KW-0963">Cytoplasm</keyword>
<keyword id="KW-0489">Methyltransferase</keyword>
<keyword id="KW-1185">Reference proteome</keyword>
<keyword id="KW-0698">rRNA processing</keyword>
<keyword id="KW-0949">S-adenosyl-L-methionine</keyword>
<keyword id="KW-0808">Transferase</keyword>
<comment type="function">
    <text evidence="1">Specifically methylates the N7 position of guanine in position 535 of 16S rRNA.</text>
</comment>
<comment type="subcellular location">
    <subcellularLocation>
        <location evidence="1">Cytoplasm</location>
    </subcellularLocation>
</comment>
<comment type="similarity">
    <text evidence="1">Belongs to the methyltransferase superfamily. RNA methyltransferase RsmG family.</text>
</comment>
<gene>
    <name evidence="1" type="primary">rsmG</name>
    <name type="ordered locus">SSP2442</name>
</gene>